<feature type="chain" id="PRO_0000252990" description="Glutamate 5-kinase">
    <location>
        <begin position="1"/>
        <end position="390"/>
    </location>
</feature>
<feature type="domain" description="PUA" evidence="1">
    <location>
        <begin position="295"/>
        <end position="374"/>
    </location>
</feature>
<feature type="binding site" evidence="1">
    <location>
        <position position="29"/>
    </location>
    <ligand>
        <name>ATP</name>
        <dbReference type="ChEBI" id="CHEBI:30616"/>
    </ligand>
</feature>
<feature type="binding site" evidence="1">
    <location>
        <position position="69"/>
    </location>
    <ligand>
        <name>substrate</name>
    </ligand>
</feature>
<feature type="binding site" evidence="1">
    <location>
        <position position="156"/>
    </location>
    <ligand>
        <name>substrate</name>
    </ligand>
</feature>
<feature type="binding site" evidence="1">
    <location>
        <position position="168"/>
    </location>
    <ligand>
        <name>substrate</name>
    </ligand>
</feature>
<feature type="binding site" evidence="1">
    <location>
        <begin position="188"/>
        <end position="189"/>
    </location>
    <ligand>
        <name>ATP</name>
        <dbReference type="ChEBI" id="CHEBI:30616"/>
    </ligand>
</feature>
<keyword id="KW-0028">Amino-acid biosynthesis</keyword>
<keyword id="KW-0067">ATP-binding</keyword>
<keyword id="KW-0963">Cytoplasm</keyword>
<keyword id="KW-0418">Kinase</keyword>
<keyword id="KW-0547">Nucleotide-binding</keyword>
<keyword id="KW-0641">Proline biosynthesis</keyword>
<keyword id="KW-0808">Transferase</keyword>
<sequence>MAVGIENTIEEARFVEQARNFDIQRVIVKIGSSLLTNNGRGLDRTAIYEWAKQIAQLHKQGVEVLLVSSGAVAEGVVRMNLEERPKKLAALQACASVGQMGLIETWWSALIQYGIQSSQLLLTHDDLSNRSRYLNTTGALTQLLEWRVLPVINENDTITIDEIKFGDNDTLGAMAAAMVNADLYIILTDQEGVFTDNPRNNPHARMIRQERAMADYLFDIAGDGGKLGRGGMLTKIRAGRLAAMGGCPTVIVSGAIDDVITRVVSGEAVGTLLTTNDQDKIIARKQWLAAHLRMSGSLIVDAGAAKAVVEHQKSLLPVGVSEVRGDFDEGDVVEIVHQDTGERIAVGQVNFSSRDACRVARERTEQFDRILGNNEERVVMVHRDNLALTM</sequence>
<proteinExistence type="inferred from homology"/>
<protein>
    <recommendedName>
        <fullName evidence="1">Glutamate 5-kinase</fullName>
        <ecNumber evidence="1">2.7.2.11</ecNumber>
    </recommendedName>
    <alternativeName>
        <fullName evidence="1">Gamma-glutamyl kinase</fullName>
        <shortName evidence="1">GK</shortName>
    </alternativeName>
</protein>
<organism>
    <name type="scientific">Psychrobacter cryohalolentis (strain ATCC BAA-1226 / DSM 17306 / VKM B-2378 / K5)</name>
    <dbReference type="NCBI Taxonomy" id="335284"/>
    <lineage>
        <taxon>Bacteria</taxon>
        <taxon>Pseudomonadati</taxon>
        <taxon>Pseudomonadota</taxon>
        <taxon>Gammaproteobacteria</taxon>
        <taxon>Moraxellales</taxon>
        <taxon>Moraxellaceae</taxon>
        <taxon>Psychrobacter</taxon>
    </lineage>
</organism>
<reference key="1">
    <citation type="submission" date="2006-03" db="EMBL/GenBank/DDBJ databases">
        <title>Complete sequence of chromosome of Psychrobacter cryohalolentis K5.</title>
        <authorList>
            <consortium name="US DOE Joint Genome Institute"/>
            <person name="Copeland A."/>
            <person name="Lucas S."/>
            <person name="Lapidus A."/>
            <person name="Barry K."/>
            <person name="Detter J.C."/>
            <person name="Glavina T."/>
            <person name="Hammon N."/>
            <person name="Israni S."/>
            <person name="Dalin E."/>
            <person name="Tice H."/>
            <person name="Pitluck S."/>
            <person name="Brettin T."/>
            <person name="Bruce D."/>
            <person name="Han C."/>
            <person name="Tapia R."/>
            <person name="Sims D.R."/>
            <person name="Gilna P."/>
            <person name="Schmutz J."/>
            <person name="Larimer F."/>
            <person name="Land M."/>
            <person name="Hauser L."/>
            <person name="Kyrpides N."/>
            <person name="Kim E."/>
            <person name="Richardson P."/>
        </authorList>
    </citation>
    <scope>NUCLEOTIDE SEQUENCE [LARGE SCALE GENOMIC DNA]</scope>
    <source>
        <strain>ATCC BAA-1226 / DSM 17306 / VKM B-2378 / K5</strain>
    </source>
</reference>
<dbReference type="EC" id="2.7.2.11" evidence="1"/>
<dbReference type="EMBL" id="CP000323">
    <property type="protein sequence ID" value="ABE75459.1"/>
    <property type="molecule type" value="Genomic_DNA"/>
</dbReference>
<dbReference type="RefSeq" id="WP_011514007.1">
    <property type="nucleotide sequence ID" value="NC_007969.1"/>
</dbReference>
<dbReference type="SMR" id="Q1QA44"/>
<dbReference type="STRING" id="335284.Pcryo_1682"/>
<dbReference type="KEGG" id="pcr:Pcryo_1682"/>
<dbReference type="eggNOG" id="COG0263">
    <property type="taxonomic scope" value="Bacteria"/>
</dbReference>
<dbReference type="HOGENOM" id="CLU_025400_2_0_6"/>
<dbReference type="UniPathway" id="UPA00098">
    <property type="reaction ID" value="UER00359"/>
</dbReference>
<dbReference type="Proteomes" id="UP000002425">
    <property type="component" value="Chromosome"/>
</dbReference>
<dbReference type="GO" id="GO:0005829">
    <property type="term" value="C:cytosol"/>
    <property type="evidence" value="ECO:0007669"/>
    <property type="project" value="TreeGrafter"/>
</dbReference>
<dbReference type="GO" id="GO:0005524">
    <property type="term" value="F:ATP binding"/>
    <property type="evidence" value="ECO:0007669"/>
    <property type="project" value="UniProtKB-KW"/>
</dbReference>
<dbReference type="GO" id="GO:0004349">
    <property type="term" value="F:glutamate 5-kinase activity"/>
    <property type="evidence" value="ECO:0007669"/>
    <property type="project" value="UniProtKB-UniRule"/>
</dbReference>
<dbReference type="GO" id="GO:0003723">
    <property type="term" value="F:RNA binding"/>
    <property type="evidence" value="ECO:0007669"/>
    <property type="project" value="InterPro"/>
</dbReference>
<dbReference type="GO" id="GO:0055129">
    <property type="term" value="P:L-proline biosynthetic process"/>
    <property type="evidence" value="ECO:0007669"/>
    <property type="project" value="UniProtKB-UniRule"/>
</dbReference>
<dbReference type="CDD" id="cd04242">
    <property type="entry name" value="AAK_G5K_ProB"/>
    <property type="match status" value="1"/>
</dbReference>
<dbReference type="CDD" id="cd21157">
    <property type="entry name" value="PUA_G5K"/>
    <property type="match status" value="1"/>
</dbReference>
<dbReference type="FunFam" id="3.40.1160.10:FF:000018">
    <property type="entry name" value="Glutamate 5-kinase"/>
    <property type="match status" value="1"/>
</dbReference>
<dbReference type="Gene3D" id="3.40.1160.10">
    <property type="entry name" value="Acetylglutamate kinase-like"/>
    <property type="match status" value="2"/>
</dbReference>
<dbReference type="Gene3D" id="2.30.130.10">
    <property type="entry name" value="PUA domain"/>
    <property type="match status" value="1"/>
</dbReference>
<dbReference type="HAMAP" id="MF_00456">
    <property type="entry name" value="ProB"/>
    <property type="match status" value="1"/>
</dbReference>
<dbReference type="InterPro" id="IPR036393">
    <property type="entry name" value="AceGlu_kinase-like_sf"/>
</dbReference>
<dbReference type="InterPro" id="IPR001048">
    <property type="entry name" value="Asp/Glu/Uridylate_kinase"/>
</dbReference>
<dbReference type="InterPro" id="IPR041739">
    <property type="entry name" value="G5K_ProB"/>
</dbReference>
<dbReference type="InterPro" id="IPR001057">
    <property type="entry name" value="Glu/AcGlu_kinase"/>
</dbReference>
<dbReference type="InterPro" id="IPR011529">
    <property type="entry name" value="Glu_5kinase"/>
</dbReference>
<dbReference type="InterPro" id="IPR005715">
    <property type="entry name" value="Glu_5kinase/COase_Synthase"/>
</dbReference>
<dbReference type="InterPro" id="IPR019797">
    <property type="entry name" value="Glutamate_5-kinase_CS"/>
</dbReference>
<dbReference type="InterPro" id="IPR002478">
    <property type="entry name" value="PUA"/>
</dbReference>
<dbReference type="InterPro" id="IPR015947">
    <property type="entry name" value="PUA-like_sf"/>
</dbReference>
<dbReference type="InterPro" id="IPR036974">
    <property type="entry name" value="PUA_sf"/>
</dbReference>
<dbReference type="NCBIfam" id="TIGR01027">
    <property type="entry name" value="proB"/>
    <property type="match status" value="1"/>
</dbReference>
<dbReference type="PANTHER" id="PTHR43654">
    <property type="entry name" value="GLUTAMATE 5-KINASE"/>
    <property type="match status" value="1"/>
</dbReference>
<dbReference type="PANTHER" id="PTHR43654:SF1">
    <property type="entry name" value="ISOPENTENYL PHOSPHATE KINASE"/>
    <property type="match status" value="1"/>
</dbReference>
<dbReference type="Pfam" id="PF00696">
    <property type="entry name" value="AA_kinase"/>
    <property type="match status" value="1"/>
</dbReference>
<dbReference type="Pfam" id="PF01472">
    <property type="entry name" value="PUA"/>
    <property type="match status" value="1"/>
</dbReference>
<dbReference type="PIRSF" id="PIRSF000729">
    <property type="entry name" value="GK"/>
    <property type="match status" value="1"/>
</dbReference>
<dbReference type="PRINTS" id="PR00474">
    <property type="entry name" value="GLU5KINASE"/>
</dbReference>
<dbReference type="SMART" id="SM00359">
    <property type="entry name" value="PUA"/>
    <property type="match status" value="1"/>
</dbReference>
<dbReference type="SUPFAM" id="SSF53633">
    <property type="entry name" value="Carbamate kinase-like"/>
    <property type="match status" value="1"/>
</dbReference>
<dbReference type="SUPFAM" id="SSF88697">
    <property type="entry name" value="PUA domain-like"/>
    <property type="match status" value="1"/>
</dbReference>
<dbReference type="PROSITE" id="PS00902">
    <property type="entry name" value="GLUTAMATE_5_KINASE"/>
    <property type="match status" value="1"/>
</dbReference>
<dbReference type="PROSITE" id="PS50890">
    <property type="entry name" value="PUA"/>
    <property type="match status" value="1"/>
</dbReference>
<gene>
    <name evidence="1" type="primary">proB</name>
    <name type="ordered locus">Pcryo_1682</name>
</gene>
<comment type="function">
    <text evidence="1">Catalyzes the transfer of a phosphate group to glutamate to form L-glutamate 5-phosphate.</text>
</comment>
<comment type="catalytic activity">
    <reaction evidence="1">
        <text>L-glutamate + ATP = L-glutamyl 5-phosphate + ADP</text>
        <dbReference type="Rhea" id="RHEA:14877"/>
        <dbReference type="ChEBI" id="CHEBI:29985"/>
        <dbReference type="ChEBI" id="CHEBI:30616"/>
        <dbReference type="ChEBI" id="CHEBI:58274"/>
        <dbReference type="ChEBI" id="CHEBI:456216"/>
        <dbReference type="EC" id="2.7.2.11"/>
    </reaction>
</comment>
<comment type="pathway">
    <text evidence="1">Amino-acid biosynthesis; L-proline biosynthesis; L-glutamate 5-semialdehyde from L-glutamate: step 1/2.</text>
</comment>
<comment type="subcellular location">
    <subcellularLocation>
        <location evidence="1">Cytoplasm</location>
    </subcellularLocation>
</comment>
<comment type="similarity">
    <text evidence="1">Belongs to the glutamate 5-kinase family.</text>
</comment>
<evidence type="ECO:0000255" key="1">
    <source>
        <dbReference type="HAMAP-Rule" id="MF_00456"/>
    </source>
</evidence>
<name>PROB_PSYCK</name>
<accession>Q1QA44</accession>